<sequence length="525" mass="58679">MTENIHKHRILILDFGSQYTQLVARRVRELGVYCELWAWDVTEAQIRDFNPSGIILSGGPESTTEENSPRAPQYVFEAGVPVFGVCYGMQTMAMQLGGHVEASNEREFGYAQVEVVNDSALVRGIEDALTADGKPLLDVWMSHGDKVTAIPSDFITVASTESCPFAIMANEEKRFYGVQFHPEVTHTRQGMRMLERFVRDICQCEALWTPAKIIDDAVARIREQVGDDKVILGLSGGVDSSVTAMLLHRAIGKNLTCVFVDNGLLRLNEAEQVLDMFGDHFGLNIVHVPAEDRFLSALAGENDPEAKRKIIGRVFVEVFDEEALKLEDVKWLAQGTIYPDVIESAASATGKAHVIKSHHNVGGLPKEMKMGLVEPLKELFKDEVRKIGLELGLPYDMLYRHPFPGPGLGVRVLGEVKKEYCDLLRRADAIFIEELRKADLYDKVSQAFTVFLPVRSVGVMGDGRKYDWVVSLRAVETIDFMTAHWAHLPYDFLGRVSNRIINEVNGISRVVYDISGKPPATIEWE</sequence>
<comment type="function">
    <text evidence="1">Catalyzes the synthesis of GMP from XMP.</text>
</comment>
<comment type="catalytic activity">
    <reaction evidence="1">
        <text>XMP + L-glutamine + ATP + H2O = GMP + L-glutamate + AMP + diphosphate + 2 H(+)</text>
        <dbReference type="Rhea" id="RHEA:11680"/>
        <dbReference type="ChEBI" id="CHEBI:15377"/>
        <dbReference type="ChEBI" id="CHEBI:15378"/>
        <dbReference type="ChEBI" id="CHEBI:29985"/>
        <dbReference type="ChEBI" id="CHEBI:30616"/>
        <dbReference type="ChEBI" id="CHEBI:33019"/>
        <dbReference type="ChEBI" id="CHEBI:57464"/>
        <dbReference type="ChEBI" id="CHEBI:58115"/>
        <dbReference type="ChEBI" id="CHEBI:58359"/>
        <dbReference type="ChEBI" id="CHEBI:456215"/>
        <dbReference type="EC" id="6.3.5.2"/>
    </reaction>
</comment>
<comment type="pathway">
    <text evidence="1">Purine metabolism; GMP biosynthesis; GMP from XMP (L-Gln route): step 1/1.</text>
</comment>
<comment type="subunit">
    <text evidence="1">Homodimer.</text>
</comment>
<gene>
    <name evidence="1" type="primary">guaA</name>
    <name type="ordered locus">ECDH10B_2673</name>
</gene>
<reference key="1">
    <citation type="journal article" date="2008" name="J. Bacteriol.">
        <title>The complete genome sequence of Escherichia coli DH10B: insights into the biology of a laboratory workhorse.</title>
        <authorList>
            <person name="Durfee T."/>
            <person name="Nelson R."/>
            <person name="Baldwin S."/>
            <person name="Plunkett G. III"/>
            <person name="Burland V."/>
            <person name="Mau B."/>
            <person name="Petrosino J.F."/>
            <person name="Qin X."/>
            <person name="Muzny D.M."/>
            <person name="Ayele M."/>
            <person name="Gibbs R.A."/>
            <person name="Csorgo B."/>
            <person name="Posfai G."/>
            <person name="Weinstock G.M."/>
            <person name="Blattner F.R."/>
        </authorList>
    </citation>
    <scope>NUCLEOTIDE SEQUENCE [LARGE SCALE GENOMIC DNA]</scope>
    <source>
        <strain>K12 / DH10B</strain>
    </source>
</reference>
<accession>B1XAY2</accession>
<organism>
    <name type="scientific">Escherichia coli (strain K12 / DH10B)</name>
    <dbReference type="NCBI Taxonomy" id="316385"/>
    <lineage>
        <taxon>Bacteria</taxon>
        <taxon>Pseudomonadati</taxon>
        <taxon>Pseudomonadota</taxon>
        <taxon>Gammaproteobacteria</taxon>
        <taxon>Enterobacterales</taxon>
        <taxon>Enterobacteriaceae</taxon>
        <taxon>Escherichia</taxon>
    </lineage>
</organism>
<evidence type="ECO:0000255" key="1">
    <source>
        <dbReference type="HAMAP-Rule" id="MF_00344"/>
    </source>
</evidence>
<proteinExistence type="inferred from homology"/>
<keyword id="KW-0067">ATP-binding</keyword>
<keyword id="KW-0315">Glutamine amidotransferase</keyword>
<keyword id="KW-0332">GMP biosynthesis</keyword>
<keyword id="KW-0436">Ligase</keyword>
<keyword id="KW-0547">Nucleotide-binding</keyword>
<keyword id="KW-0658">Purine biosynthesis</keyword>
<name>GUAA_ECODH</name>
<protein>
    <recommendedName>
        <fullName evidence="1">GMP synthase [glutamine-hydrolyzing]</fullName>
        <ecNumber evidence="1">6.3.5.2</ecNumber>
    </recommendedName>
    <alternativeName>
        <fullName evidence="1">GMP synthetase</fullName>
    </alternativeName>
    <alternativeName>
        <fullName evidence="1">Glutamine amidotransferase</fullName>
    </alternativeName>
</protein>
<dbReference type="EC" id="6.3.5.2" evidence="1"/>
<dbReference type="EMBL" id="CP000948">
    <property type="protein sequence ID" value="ACB03659.1"/>
    <property type="molecule type" value="Genomic_DNA"/>
</dbReference>
<dbReference type="RefSeq" id="WP_000138270.1">
    <property type="nucleotide sequence ID" value="NC_010473.1"/>
</dbReference>
<dbReference type="SMR" id="B1XAY2"/>
<dbReference type="MEROPS" id="C26.957"/>
<dbReference type="KEGG" id="ecd:ECDH10B_2673"/>
<dbReference type="HOGENOM" id="CLU_014340_0_5_6"/>
<dbReference type="UniPathway" id="UPA00189">
    <property type="reaction ID" value="UER00296"/>
</dbReference>
<dbReference type="GO" id="GO:0005829">
    <property type="term" value="C:cytosol"/>
    <property type="evidence" value="ECO:0007669"/>
    <property type="project" value="TreeGrafter"/>
</dbReference>
<dbReference type="GO" id="GO:0005524">
    <property type="term" value="F:ATP binding"/>
    <property type="evidence" value="ECO:0007669"/>
    <property type="project" value="UniProtKB-UniRule"/>
</dbReference>
<dbReference type="GO" id="GO:0003921">
    <property type="term" value="F:GMP synthase activity"/>
    <property type="evidence" value="ECO:0007669"/>
    <property type="project" value="InterPro"/>
</dbReference>
<dbReference type="CDD" id="cd01742">
    <property type="entry name" value="GATase1_GMP_Synthase"/>
    <property type="match status" value="1"/>
</dbReference>
<dbReference type="CDD" id="cd01997">
    <property type="entry name" value="GMP_synthase_C"/>
    <property type="match status" value="1"/>
</dbReference>
<dbReference type="FunFam" id="3.30.300.10:FF:000002">
    <property type="entry name" value="GMP synthase [glutamine-hydrolyzing]"/>
    <property type="match status" value="1"/>
</dbReference>
<dbReference type="FunFam" id="3.40.50.620:FF:000001">
    <property type="entry name" value="GMP synthase [glutamine-hydrolyzing]"/>
    <property type="match status" value="1"/>
</dbReference>
<dbReference type="FunFam" id="3.40.50.880:FF:000001">
    <property type="entry name" value="GMP synthase [glutamine-hydrolyzing]"/>
    <property type="match status" value="1"/>
</dbReference>
<dbReference type="Gene3D" id="3.30.300.10">
    <property type="match status" value="1"/>
</dbReference>
<dbReference type="Gene3D" id="3.40.50.880">
    <property type="match status" value="1"/>
</dbReference>
<dbReference type="Gene3D" id="3.40.50.620">
    <property type="entry name" value="HUPs"/>
    <property type="match status" value="1"/>
</dbReference>
<dbReference type="HAMAP" id="MF_00344">
    <property type="entry name" value="GMP_synthase"/>
    <property type="match status" value="1"/>
</dbReference>
<dbReference type="InterPro" id="IPR029062">
    <property type="entry name" value="Class_I_gatase-like"/>
</dbReference>
<dbReference type="InterPro" id="IPR017926">
    <property type="entry name" value="GATASE"/>
</dbReference>
<dbReference type="InterPro" id="IPR001674">
    <property type="entry name" value="GMP_synth_C"/>
</dbReference>
<dbReference type="InterPro" id="IPR004739">
    <property type="entry name" value="GMP_synth_GATase"/>
</dbReference>
<dbReference type="InterPro" id="IPR022955">
    <property type="entry name" value="GMP_synthase"/>
</dbReference>
<dbReference type="InterPro" id="IPR025777">
    <property type="entry name" value="GMPS_ATP_PPase_dom"/>
</dbReference>
<dbReference type="InterPro" id="IPR022310">
    <property type="entry name" value="NAD/GMP_synthase"/>
</dbReference>
<dbReference type="InterPro" id="IPR014729">
    <property type="entry name" value="Rossmann-like_a/b/a_fold"/>
</dbReference>
<dbReference type="NCBIfam" id="TIGR00884">
    <property type="entry name" value="guaA_Cterm"/>
    <property type="match status" value="1"/>
</dbReference>
<dbReference type="NCBIfam" id="TIGR00888">
    <property type="entry name" value="guaA_Nterm"/>
    <property type="match status" value="1"/>
</dbReference>
<dbReference type="NCBIfam" id="NF000848">
    <property type="entry name" value="PRK00074.1"/>
    <property type="match status" value="1"/>
</dbReference>
<dbReference type="PANTHER" id="PTHR11922:SF2">
    <property type="entry name" value="GMP SYNTHASE [GLUTAMINE-HYDROLYZING]"/>
    <property type="match status" value="1"/>
</dbReference>
<dbReference type="PANTHER" id="PTHR11922">
    <property type="entry name" value="GMP SYNTHASE-RELATED"/>
    <property type="match status" value="1"/>
</dbReference>
<dbReference type="Pfam" id="PF00117">
    <property type="entry name" value="GATase"/>
    <property type="match status" value="1"/>
</dbReference>
<dbReference type="Pfam" id="PF00958">
    <property type="entry name" value="GMP_synt_C"/>
    <property type="match status" value="1"/>
</dbReference>
<dbReference type="Pfam" id="PF02540">
    <property type="entry name" value="NAD_synthase"/>
    <property type="match status" value="1"/>
</dbReference>
<dbReference type="PRINTS" id="PR00097">
    <property type="entry name" value="ANTSNTHASEII"/>
</dbReference>
<dbReference type="PRINTS" id="PR00099">
    <property type="entry name" value="CPSGATASE"/>
</dbReference>
<dbReference type="PRINTS" id="PR00096">
    <property type="entry name" value="GATASE"/>
</dbReference>
<dbReference type="SUPFAM" id="SSF52402">
    <property type="entry name" value="Adenine nucleotide alpha hydrolases-like"/>
    <property type="match status" value="1"/>
</dbReference>
<dbReference type="SUPFAM" id="SSF52317">
    <property type="entry name" value="Class I glutamine amidotransferase-like"/>
    <property type="match status" value="1"/>
</dbReference>
<dbReference type="SUPFAM" id="SSF54810">
    <property type="entry name" value="GMP synthetase C-terminal dimerisation domain"/>
    <property type="match status" value="1"/>
</dbReference>
<dbReference type="PROSITE" id="PS51273">
    <property type="entry name" value="GATASE_TYPE_1"/>
    <property type="match status" value="1"/>
</dbReference>
<dbReference type="PROSITE" id="PS51553">
    <property type="entry name" value="GMPS_ATP_PPASE"/>
    <property type="match status" value="1"/>
</dbReference>
<feature type="chain" id="PRO_1000120283" description="GMP synthase [glutamine-hydrolyzing]">
    <location>
        <begin position="1"/>
        <end position="525"/>
    </location>
</feature>
<feature type="domain" description="Glutamine amidotransferase type-1" evidence="1">
    <location>
        <begin position="9"/>
        <end position="207"/>
    </location>
</feature>
<feature type="domain" description="GMPS ATP-PPase" evidence="1">
    <location>
        <begin position="208"/>
        <end position="400"/>
    </location>
</feature>
<feature type="active site" description="Nucleophile" evidence="1">
    <location>
        <position position="86"/>
    </location>
</feature>
<feature type="active site" evidence="1">
    <location>
        <position position="181"/>
    </location>
</feature>
<feature type="active site" evidence="1">
    <location>
        <position position="183"/>
    </location>
</feature>
<feature type="binding site" evidence="1">
    <location>
        <begin position="235"/>
        <end position="241"/>
    </location>
    <ligand>
        <name>ATP</name>
        <dbReference type="ChEBI" id="CHEBI:30616"/>
    </ligand>
</feature>